<name>LEC2_CYTSC</name>
<reference key="1">
    <citation type="journal article" date="1992" name="J. Biochem.">
        <title>The primary structure of the Cytisus scoparius seed lectin and a carbohydrate-binding peptide.</title>
        <authorList>
            <person name="Konami Y."/>
            <person name="Yamamoto K."/>
            <person name="Osawa T."/>
            <person name="Irimura T."/>
        </authorList>
    </citation>
    <scope>PROTEIN SEQUENCE</scope>
    <scope>GLYCOSYLATION AT ASN-119</scope>
    <source>
        <tissue>Seed</tissue>
    </source>
</reference>
<reference key="2">
    <citation type="journal article" date="1984" name="Biochem. J.">
        <title>Structural differences between two lectins from Cytisus scoparius, both specific for D-galactose and N-acetyl-D-galactosamine.</title>
        <authorList>
            <person name="Young N.M."/>
            <person name="Watson D.C."/>
            <person name="Williams R.E."/>
        </authorList>
    </citation>
    <scope>PROTEIN SEQUENCE OF 1-32</scope>
</reference>
<sequence length="248" mass="27028">SEELSFSFTKFKTDQKNLILQRDALITPTGKLQLTTVENGKPAAYSLGRALYSTPIHIWDKSTGDEASFATFFSFVISDAPNPSTAATDGLAFFLAPADTQPQSAGGYLGLFEKDSSYNSSNQIVAVEFDTYYNSAWDPQTNPHIGIDVNTIKSKKVSSWGFKNGNVATVLITYQPSSKSLVASLVYPSGQTSDKTSYIISANVDLKATVPEWVRIGFSATTGQTDNYIETHDILSWSFKSKLPATKN</sequence>
<feature type="chain" id="PRO_0000105093" description="2-acetamido-2-deoxy-D-galactose-binding seed lectin 2">
    <location>
        <begin position="1"/>
        <end position="248"/>
    </location>
</feature>
<feature type="binding site" evidence="1">
    <location>
        <position position="128"/>
    </location>
    <ligand>
        <name>Mn(2+)</name>
        <dbReference type="ChEBI" id="CHEBI:29035"/>
    </ligand>
</feature>
<feature type="binding site" evidence="1">
    <location>
        <position position="130"/>
    </location>
    <ligand>
        <name>Ca(2+)</name>
        <dbReference type="ChEBI" id="CHEBI:29108"/>
    </ligand>
</feature>
<feature type="binding site" evidence="1">
    <location>
        <position position="130"/>
    </location>
    <ligand>
        <name>Mn(2+)</name>
        <dbReference type="ChEBI" id="CHEBI:29035"/>
    </ligand>
</feature>
<feature type="binding site" evidence="1">
    <location>
        <position position="132"/>
    </location>
    <ligand>
        <name>Ca(2+)</name>
        <dbReference type="ChEBI" id="CHEBI:29108"/>
    </ligand>
</feature>
<feature type="binding site" evidence="1">
    <location>
        <position position="134"/>
    </location>
    <ligand>
        <name>Ca(2+)</name>
        <dbReference type="ChEBI" id="CHEBI:29108"/>
    </ligand>
</feature>
<feature type="binding site" evidence="1">
    <location>
        <position position="138"/>
    </location>
    <ligand>
        <name>Ca(2+)</name>
        <dbReference type="ChEBI" id="CHEBI:29108"/>
    </ligand>
</feature>
<feature type="binding site" evidence="1">
    <location>
        <position position="138"/>
    </location>
    <ligand>
        <name>Mn(2+)</name>
        <dbReference type="ChEBI" id="CHEBI:29035"/>
    </ligand>
</feature>
<feature type="binding site" evidence="1">
    <location>
        <position position="144"/>
    </location>
    <ligand>
        <name>Mn(2+)</name>
        <dbReference type="ChEBI" id="CHEBI:29035"/>
    </ligand>
</feature>
<feature type="glycosylation site" description="N-linked (GlcNAc...) asparagine; partial" evidence="2">
    <location>
        <position position="119"/>
    </location>
</feature>
<evidence type="ECO:0000250" key="1"/>
<evidence type="ECO:0000269" key="2">
    <source>
    </source>
</evidence>
<evidence type="ECO:0000305" key="3"/>
<proteinExistence type="evidence at protein level"/>
<protein>
    <recommendedName>
        <fullName>2-acetamido-2-deoxy-D-galactose-binding seed lectin 2</fullName>
    </recommendedName>
    <alternativeName>
        <fullName>2-acetamido-2-deoxy-D-galactose-binding seed lectin II</fullName>
        <shortName>CSII</shortName>
    </alternativeName>
</protein>
<keyword id="KW-0106">Calcium</keyword>
<keyword id="KW-0903">Direct protein sequencing</keyword>
<keyword id="KW-0325">Glycoprotein</keyword>
<keyword id="KW-0430">Lectin</keyword>
<keyword id="KW-0464">Manganese</keyword>
<keyword id="KW-0479">Metal-binding</keyword>
<organism>
    <name type="scientific">Cytisus scoparius</name>
    <name type="common">Scotch broom</name>
    <name type="synonym">Spartium scoparium</name>
    <dbReference type="NCBI Taxonomy" id="3835"/>
    <lineage>
        <taxon>Eukaryota</taxon>
        <taxon>Viridiplantae</taxon>
        <taxon>Streptophyta</taxon>
        <taxon>Embryophyta</taxon>
        <taxon>Tracheophyta</taxon>
        <taxon>Spermatophyta</taxon>
        <taxon>Magnoliopsida</taxon>
        <taxon>eudicotyledons</taxon>
        <taxon>Gunneridae</taxon>
        <taxon>Pentapetalae</taxon>
        <taxon>rosids</taxon>
        <taxon>fabids</taxon>
        <taxon>Fabales</taxon>
        <taxon>Fabaceae</taxon>
        <taxon>Papilionoideae</taxon>
        <taxon>50 kb inversion clade</taxon>
        <taxon>genistoids sensu lato</taxon>
        <taxon>core genistoids</taxon>
        <taxon>Genisteae</taxon>
        <taxon>Cytisus</taxon>
    </lineage>
</organism>
<dbReference type="PIR" id="JQ1981">
    <property type="entry name" value="JQ1981"/>
</dbReference>
<dbReference type="SMR" id="P29257"/>
<dbReference type="iPTMnet" id="P29257"/>
<dbReference type="GO" id="GO:0030246">
    <property type="term" value="F:carbohydrate binding"/>
    <property type="evidence" value="ECO:0007669"/>
    <property type="project" value="UniProtKB-KW"/>
</dbReference>
<dbReference type="GO" id="GO:0046872">
    <property type="term" value="F:metal ion binding"/>
    <property type="evidence" value="ECO:0007669"/>
    <property type="project" value="UniProtKB-KW"/>
</dbReference>
<dbReference type="CDD" id="cd06899">
    <property type="entry name" value="lectin_legume_LecRK_Arcelin_ConA"/>
    <property type="match status" value="1"/>
</dbReference>
<dbReference type="Gene3D" id="2.60.120.200">
    <property type="match status" value="1"/>
</dbReference>
<dbReference type="InterPro" id="IPR013320">
    <property type="entry name" value="ConA-like_dom_sf"/>
</dbReference>
<dbReference type="InterPro" id="IPR016363">
    <property type="entry name" value="L-lectin"/>
</dbReference>
<dbReference type="InterPro" id="IPR000985">
    <property type="entry name" value="Lectin_LegA_CS"/>
</dbReference>
<dbReference type="InterPro" id="IPR019825">
    <property type="entry name" value="Lectin_legB_Mn/Ca_BS"/>
</dbReference>
<dbReference type="InterPro" id="IPR001220">
    <property type="entry name" value="Legume_lectin_dom"/>
</dbReference>
<dbReference type="InterPro" id="IPR050258">
    <property type="entry name" value="Leguminous_Lectin"/>
</dbReference>
<dbReference type="PANTHER" id="PTHR32401">
    <property type="entry name" value="CONCANAVALIN A-LIKE LECTIN FAMILY PROTEIN"/>
    <property type="match status" value="1"/>
</dbReference>
<dbReference type="PANTHER" id="PTHR32401:SF45">
    <property type="entry name" value="LECTIN"/>
    <property type="match status" value="1"/>
</dbReference>
<dbReference type="Pfam" id="PF00139">
    <property type="entry name" value="Lectin_legB"/>
    <property type="match status" value="1"/>
</dbReference>
<dbReference type="PIRSF" id="PIRSF002690">
    <property type="entry name" value="L-type_lectin_plant"/>
    <property type="match status" value="1"/>
</dbReference>
<dbReference type="SUPFAM" id="SSF49899">
    <property type="entry name" value="Concanavalin A-like lectins/glucanases"/>
    <property type="match status" value="1"/>
</dbReference>
<dbReference type="PROSITE" id="PS00308">
    <property type="entry name" value="LECTIN_LEGUME_ALPHA"/>
    <property type="match status" value="1"/>
</dbReference>
<dbReference type="PROSITE" id="PS00307">
    <property type="entry name" value="LECTIN_LEGUME_BETA"/>
    <property type="match status" value="1"/>
</dbReference>
<accession>P29257</accession>
<comment type="similarity">
    <text evidence="3">Belongs to the leguminous lectin family.</text>
</comment>